<feature type="chain" id="PRO_0000375777" description="Succinyl-diaminopimelate desuccinylase">
    <location>
        <begin position="1"/>
        <end position="398"/>
    </location>
</feature>
<feature type="active site" evidence="1">
    <location>
        <position position="70"/>
    </location>
</feature>
<feature type="active site" description="Proton acceptor" evidence="1">
    <location>
        <position position="135"/>
    </location>
</feature>
<feature type="binding site" evidence="1">
    <location>
        <position position="68"/>
    </location>
    <ligand>
        <name>Zn(2+)</name>
        <dbReference type="ChEBI" id="CHEBI:29105"/>
        <label>1</label>
    </ligand>
</feature>
<feature type="binding site" evidence="1">
    <location>
        <position position="101"/>
    </location>
    <ligand>
        <name>Zn(2+)</name>
        <dbReference type="ChEBI" id="CHEBI:29105"/>
        <label>1</label>
    </ligand>
</feature>
<feature type="binding site" evidence="1">
    <location>
        <position position="101"/>
    </location>
    <ligand>
        <name>Zn(2+)</name>
        <dbReference type="ChEBI" id="CHEBI:29105"/>
        <label>2</label>
    </ligand>
</feature>
<feature type="binding site" evidence="1">
    <location>
        <position position="136"/>
    </location>
    <ligand>
        <name>Zn(2+)</name>
        <dbReference type="ChEBI" id="CHEBI:29105"/>
        <label>2</label>
    </ligand>
</feature>
<feature type="binding site" evidence="1">
    <location>
        <position position="164"/>
    </location>
    <ligand>
        <name>Zn(2+)</name>
        <dbReference type="ChEBI" id="CHEBI:29105"/>
        <label>1</label>
    </ligand>
</feature>
<feature type="binding site" evidence="1">
    <location>
        <position position="349"/>
    </location>
    <ligand>
        <name>Zn(2+)</name>
        <dbReference type="ChEBI" id="CHEBI:29105"/>
        <label>2</label>
    </ligand>
</feature>
<dbReference type="EC" id="3.5.1.18" evidence="1"/>
<dbReference type="EMBL" id="AE017196">
    <property type="protein sequence ID" value="AAS14476.1"/>
    <property type="molecule type" value="Genomic_DNA"/>
</dbReference>
<dbReference type="RefSeq" id="WP_010082500.1">
    <property type="nucleotide sequence ID" value="NZ_OX384529.1"/>
</dbReference>
<dbReference type="SMR" id="Q73GZ0"/>
<dbReference type="EnsemblBacteria" id="AAS14476">
    <property type="protein sequence ID" value="AAS14476"/>
    <property type="gene ID" value="WD_0788"/>
</dbReference>
<dbReference type="GeneID" id="70036268"/>
<dbReference type="KEGG" id="wol:WD_0788"/>
<dbReference type="eggNOG" id="COG0624">
    <property type="taxonomic scope" value="Bacteria"/>
</dbReference>
<dbReference type="UniPathway" id="UPA00034">
    <property type="reaction ID" value="UER00021"/>
</dbReference>
<dbReference type="Proteomes" id="UP000008215">
    <property type="component" value="Chromosome"/>
</dbReference>
<dbReference type="GO" id="GO:0008777">
    <property type="term" value="F:acetylornithine deacetylase activity"/>
    <property type="evidence" value="ECO:0007669"/>
    <property type="project" value="TreeGrafter"/>
</dbReference>
<dbReference type="GO" id="GO:0050897">
    <property type="term" value="F:cobalt ion binding"/>
    <property type="evidence" value="ECO:0007669"/>
    <property type="project" value="UniProtKB-UniRule"/>
</dbReference>
<dbReference type="GO" id="GO:0009014">
    <property type="term" value="F:succinyl-diaminopimelate desuccinylase activity"/>
    <property type="evidence" value="ECO:0007669"/>
    <property type="project" value="UniProtKB-UniRule"/>
</dbReference>
<dbReference type="GO" id="GO:0008270">
    <property type="term" value="F:zinc ion binding"/>
    <property type="evidence" value="ECO:0007669"/>
    <property type="project" value="UniProtKB-UniRule"/>
</dbReference>
<dbReference type="GO" id="GO:0019877">
    <property type="term" value="P:diaminopimelate biosynthetic process"/>
    <property type="evidence" value="ECO:0007669"/>
    <property type="project" value="UniProtKB-UniRule"/>
</dbReference>
<dbReference type="GO" id="GO:0006526">
    <property type="term" value="P:L-arginine biosynthetic process"/>
    <property type="evidence" value="ECO:0007669"/>
    <property type="project" value="TreeGrafter"/>
</dbReference>
<dbReference type="GO" id="GO:0009089">
    <property type="term" value="P:lysine biosynthetic process via diaminopimelate"/>
    <property type="evidence" value="ECO:0007669"/>
    <property type="project" value="UniProtKB-UniRule"/>
</dbReference>
<dbReference type="CDD" id="cd03891">
    <property type="entry name" value="M20_DapE_proteobac"/>
    <property type="match status" value="1"/>
</dbReference>
<dbReference type="Gene3D" id="3.30.70.360">
    <property type="match status" value="1"/>
</dbReference>
<dbReference type="Gene3D" id="3.40.630.10">
    <property type="entry name" value="Zn peptidases"/>
    <property type="match status" value="2"/>
</dbReference>
<dbReference type="HAMAP" id="MF_01690">
    <property type="entry name" value="DapE"/>
    <property type="match status" value="1"/>
</dbReference>
<dbReference type="InterPro" id="IPR036264">
    <property type="entry name" value="Bact_exopeptidase_dim_dom"/>
</dbReference>
<dbReference type="InterPro" id="IPR005941">
    <property type="entry name" value="DapE_proteobac"/>
</dbReference>
<dbReference type="InterPro" id="IPR002933">
    <property type="entry name" value="Peptidase_M20"/>
</dbReference>
<dbReference type="InterPro" id="IPR011650">
    <property type="entry name" value="Peptidase_M20_dimer"/>
</dbReference>
<dbReference type="InterPro" id="IPR050072">
    <property type="entry name" value="Peptidase_M20A"/>
</dbReference>
<dbReference type="NCBIfam" id="TIGR01246">
    <property type="entry name" value="dapE_proteo"/>
    <property type="match status" value="1"/>
</dbReference>
<dbReference type="NCBIfam" id="NF009557">
    <property type="entry name" value="PRK13009.1"/>
    <property type="match status" value="1"/>
</dbReference>
<dbReference type="PANTHER" id="PTHR43808">
    <property type="entry name" value="ACETYLORNITHINE DEACETYLASE"/>
    <property type="match status" value="1"/>
</dbReference>
<dbReference type="PANTHER" id="PTHR43808:SF31">
    <property type="entry name" value="N-ACETYL-L-CITRULLINE DEACETYLASE"/>
    <property type="match status" value="1"/>
</dbReference>
<dbReference type="Pfam" id="PF07687">
    <property type="entry name" value="M20_dimer"/>
    <property type="match status" value="1"/>
</dbReference>
<dbReference type="Pfam" id="PF01546">
    <property type="entry name" value="Peptidase_M20"/>
    <property type="match status" value="1"/>
</dbReference>
<dbReference type="SUPFAM" id="SSF55031">
    <property type="entry name" value="Bacterial exopeptidase dimerisation domain"/>
    <property type="match status" value="1"/>
</dbReference>
<dbReference type="SUPFAM" id="SSF53187">
    <property type="entry name" value="Zn-dependent exopeptidases"/>
    <property type="match status" value="1"/>
</dbReference>
<keyword id="KW-0028">Amino-acid biosynthesis</keyword>
<keyword id="KW-0170">Cobalt</keyword>
<keyword id="KW-0220">Diaminopimelate biosynthesis</keyword>
<keyword id="KW-0378">Hydrolase</keyword>
<keyword id="KW-0457">Lysine biosynthesis</keyword>
<keyword id="KW-0479">Metal-binding</keyword>
<keyword id="KW-0862">Zinc</keyword>
<comment type="function">
    <text evidence="1">Catalyzes the hydrolysis of N-succinyl-L,L-diaminopimelic acid (SDAP), forming succinate and LL-2,6-diaminopimelate (DAP), an intermediate involved in the bacterial biosynthesis of lysine and meso-diaminopimelic acid, an essential component of bacterial cell walls.</text>
</comment>
<comment type="catalytic activity">
    <reaction evidence="1">
        <text>N-succinyl-(2S,6S)-2,6-diaminopimelate + H2O = (2S,6S)-2,6-diaminopimelate + succinate</text>
        <dbReference type="Rhea" id="RHEA:22608"/>
        <dbReference type="ChEBI" id="CHEBI:15377"/>
        <dbReference type="ChEBI" id="CHEBI:30031"/>
        <dbReference type="ChEBI" id="CHEBI:57609"/>
        <dbReference type="ChEBI" id="CHEBI:58087"/>
        <dbReference type="EC" id="3.5.1.18"/>
    </reaction>
</comment>
<comment type="cofactor">
    <cofactor evidence="1">
        <name>Zn(2+)</name>
        <dbReference type="ChEBI" id="CHEBI:29105"/>
    </cofactor>
    <cofactor evidence="1">
        <name>Co(2+)</name>
        <dbReference type="ChEBI" id="CHEBI:48828"/>
    </cofactor>
    <text evidence="1">Binds 2 Zn(2+) or Co(2+) ions per subunit.</text>
</comment>
<comment type="pathway">
    <text evidence="1">Amino-acid biosynthesis; L-lysine biosynthesis via DAP pathway; LL-2,6-diaminopimelate from (S)-tetrahydrodipicolinate (succinylase route): step 3/3.</text>
</comment>
<comment type="subunit">
    <text evidence="1">Homodimer.</text>
</comment>
<comment type="similarity">
    <text evidence="1">Belongs to the peptidase M20A family. DapE subfamily.</text>
</comment>
<proteinExistence type="inferred from homology"/>
<protein>
    <recommendedName>
        <fullName evidence="1">Succinyl-diaminopimelate desuccinylase</fullName>
        <shortName evidence="1">SDAP desuccinylase</shortName>
        <ecNumber evidence="1">3.5.1.18</ecNumber>
    </recommendedName>
    <alternativeName>
        <fullName evidence="1">N-succinyl-LL-2,6-diaminoheptanedioate amidohydrolase</fullName>
    </alternativeName>
</protein>
<accession>Q73GZ0</accession>
<evidence type="ECO:0000255" key="1">
    <source>
        <dbReference type="HAMAP-Rule" id="MF_01690"/>
    </source>
</evidence>
<sequence>MKIDPVELTRKLISFESITPEDSGAIEYIATIFKKSGFDCEILEFGDKVKNLYAKYINGVPNLCFAGHVDVVPPGQLKDWAFGPFKPEVRDGMLYGRGAADMKSGVAAFIAAMVNLIAEKFQFNGSISALITSAEESMEEYGTKAVLEWMKNKQKKIDFCVVGEPTSSEKLGDTIKIGRRGSVTFELICHGKQGHVAYPDLADNPIYKVISILSKVKNTTFDHGNKYFQPSHCEVTTIDVGNNTSNLIPGSATTRFNIRYNNEQTPGGLYKLIDEICSSVTNDYKLSMHSSRDVFLSTPDRNTDIMLDAISKVTNIDAILSTSGGTSDAAFIKDVCPVIEFGIINKTAHQINECVSVNDIHKLTAIYKEFIENYFNPTNKILNQVNVVSNISSGPLLA</sequence>
<name>DAPE_WOLPM</name>
<organism>
    <name type="scientific">Wolbachia pipientis wMel</name>
    <dbReference type="NCBI Taxonomy" id="163164"/>
    <lineage>
        <taxon>Bacteria</taxon>
        <taxon>Pseudomonadati</taxon>
        <taxon>Pseudomonadota</taxon>
        <taxon>Alphaproteobacteria</taxon>
        <taxon>Rickettsiales</taxon>
        <taxon>Anaplasmataceae</taxon>
        <taxon>Wolbachieae</taxon>
        <taxon>Wolbachia</taxon>
    </lineage>
</organism>
<reference key="1">
    <citation type="journal article" date="2004" name="PLoS Biol.">
        <title>Phylogenomics of the reproductive parasite Wolbachia pipientis wMel: a streamlined genome overrun by mobile genetic elements.</title>
        <authorList>
            <person name="Wu M."/>
            <person name="Sun L.V."/>
            <person name="Vamathevan J.J."/>
            <person name="Riegler M."/>
            <person name="DeBoy R.T."/>
            <person name="Brownlie J.C."/>
            <person name="McGraw E.A."/>
            <person name="Martin W."/>
            <person name="Esser C."/>
            <person name="Ahmadinejad N."/>
            <person name="Wiegand C."/>
            <person name="Madupu R."/>
            <person name="Beanan M.J."/>
            <person name="Brinkac L.M."/>
            <person name="Daugherty S.C."/>
            <person name="Durkin A.S."/>
            <person name="Kolonay J.F."/>
            <person name="Nelson W.C."/>
            <person name="Mohamoud Y."/>
            <person name="Lee P."/>
            <person name="Berry K.J."/>
            <person name="Young M.B."/>
            <person name="Utterback T.R."/>
            <person name="Weidman J.F."/>
            <person name="Nierman W.C."/>
            <person name="Paulsen I.T."/>
            <person name="Nelson K.E."/>
            <person name="Tettelin H."/>
            <person name="O'Neill S.L."/>
            <person name="Eisen J.A."/>
        </authorList>
    </citation>
    <scope>NUCLEOTIDE SEQUENCE [LARGE SCALE GENOMIC DNA]</scope>
</reference>
<gene>
    <name evidence="1" type="primary">dapE</name>
    <name type="ordered locus">WD_0788</name>
</gene>